<feature type="chain" id="PRO_1000184272" description="ATP synthase subunit a">
    <location>
        <begin position="1"/>
        <end position="250"/>
    </location>
</feature>
<feature type="transmembrane region" description="Helical" evidence="1">
    <location>
        <begin position="29"/>
        <end position="49"/>
    </location>
</feature>
<feature type="transmembrane region" description="Helical" evidence="1">
    <location>
        <begin position="84"/>
        <end position="104"/>
    </location>
</feature>
<feature type="transmembrane region" description="Helical" evidence="1">
    <location>
        <begin position="114"/>
        <end position="134"/>
    </location>
</feature>
<feature type="transmembrane region" description="Helical" evidence="1">
    <location>
        <begin position="143"/>
        <end position="163"/>
    </location>
</feature>
<feature type="transmembrane region" description="Helical" evidence="1">
    <location>
        <begin position="185"/>
        <end position="205"/>
    </location>
</feature>
<feature type="transmembrane region" description="Helical" evidence="1">
    <location>
        <begin position="208"/>
        <end position="228"/>
    </location>
</feature>
<organism>
    <name type="scientific">Rhizobium rhizogenes (strain K84 / ATCC BAA-868)</name>
    <name type="common">Agrobacterium radiobacter</name>
    <dbReference type="NCBI Taxonomy" id="311403"/>
    <lineage>
        <taxon>Bacteria</taxon>
        <taxon>Pseudomonadati</taxon>
        <taxon>Pseudomonadota</taxon>
        <taxon>Alphaproteobacteria</taxon>
        <taxon>Hyphomicrobiales</taxon>
        <taxon>Rhizobiaceae</taxon>
        <taxon>Rhizobium/Agrobacterium group</taxon>
        <taxon>Rhizobium</taxon>
    </lineage>
</organism>
<keyword id="KW-0066">ATP synthesis</keyword>
<keyword id="KW-0997">Cell inner membrane</keyword>
<keyword id="KW-1003">Cell membrane</keyword>
<keyword id="KW-0138">CF(0)</keyword>
<keyword id="KW-0375">Hydrogen ion transport</keyword>
<keyword id="KW-0406">Ion transport</keyword>
<keyword id="KW-0472">Membrane</keyword>
<keyword id="KW-0812">Transmembrane</keyword>
<keyword id="KW-1133">Transmembrane helix</keyword>
<keyword id="KW-0813">Transport</keyword>
<dbReference type="EMBL" id="CP000628">
    <property type="protein sequence ID" value="ACM25646.1"/>
    <property type="molecule type" value="Genomic_DNA"/>
</dbReference>
<dbReference type="RefSeq" id="WP_012651026.1">
    <property type="nucleotide sequence ID" value="NC_011985.1"/>
</dbReference>
<dbReference type="SMR" id="B9JA28"/>
<dbReference type="STRING" id="311403.Arad_1117"/>
<dbReference type="KEGG" id="ara:Arad_1117"/>
<dbReference type="eggNOG" id="COG0356">
    <property type="taxonomic scope" value="Bacteria"/>
</dbReference>
<dbReference type="HOGENOM" id="CLU_041018_0_2_5"/>
<dbReference type="Proteomes" id="UP000001600">
    <property type="component" value="Chromosome 1"/>
</dbReference>
<dbReference type="GO" id="GO:0005886">
    <property type="term" value="C:plasma membrane"/>
    <property type="evidence" value="ECO:0007669"/>
    <property type="project" value="UniProtKB-SubCell"/>
</dbReference>
<dbReference type="GO" id="GO:0045259">
    <property type="term" value="C:proton-transporting ATP synthase complex"/>
    <property type="evidence" value="ECO:0007669"/>
    <property type="project" value="UniProtKB-KW"/>
</dbReference>
<dbReference type="GO" id="GO:0046933">
    <property type="term" value="F:proton-transporting ATP synthase activity, rotational mechanism"/>
    <property type="evidence" value="ECO:0007669"/>
    <property type="project" value="UniProtKB-UniRule"/>
</dbReference>
<dbReference type="CDD" id="cd00310">
    <property type="entry name" value="ATP-synt_Fo_a_6"/>
    <property type="match status" value="1"/>
</dbReference>
<dbReference type="FunFam" id="1.20.120.220:FF:000003">
    <property type="entry name" value="ATP synthase subunit a"/>
    <property type="match status" value="1"/>
</dbReference>
<dbReference type="Gene3D" id="1.20.120.220">
    <property type="entry name" value="ATP synthase, F0 complex, subunit A"/>
    <property type="match status" value="1"/>
</dbReference>
<dbReference type="HAMAP" id="MF_01393">
    <property type="entry name" value="ATP_synth_a_bact"/>
    <property type="match status" value="1"/>
</dbReference>
<dbReference type="InterPro" id="IPR000568">
    <property type="entry name" value="ATP_synth_F0_asu"/>
</dbReference>
<dbReference type="InterPro" id="IPR023011">
    <property type="entry name" value="ATP_synth_F0_asu_AS"/>
</dbReference>
<dbReference type="InterPro" id="IPR045083">
    <property type="entry name" value="ATP_synth_F0_asu_bact/mt"/>
</dbReference>
<dbReference type="InterPro" id="IPR035908">
    <property type="entry name" value="F0_ATP_A_sf"/>
</dbReference>
<dbReference type="NCBIfam" id="TIGR01131">
    <property type="entry name" value="ATP_synt_6_or_A"/>
    <property type="match status" value="1"/>
</dbReference>
<dbReference type="NCBIfam" id="NF004482">
    <property type="entry name" value="PRK05815.2-4"/>
    <property type="match status" value="1"/>
</dbReference>
<dbReference type="PANTHER" id="PTHR11410">
    <property type="entry name" value="ATP SYNTHASE SUBUNIT A"/>
    <property type="match status" value="1"/>
</dbReference>
<dbReference type="PANTHER" id="PTHR11410:SF0">
    <property type="entry name" value="ATP SYNTHASE SUBUNIT A"/>
    <property type="match status" value="1"/>
</dbReference>
<dbReference type="Pfam" id="PF00119">
    <property type="entry name" value="ATP-synt_A"/>
    <property type="match status" value="1"/>
</dbReference>
<dbReference type="PRINTS" id="PR00123">
    <property type="entry name" value="ATPASEA"/>
</dbReference>
<dbReference type="SUPFAM" id="SSF81336">
    <property type="entry name" value="F1F0 ATP synthase subunit A"/>
    <property type="match status" value="1"/>
</dbReference>
<dbReference type="PROSITE" id="PS00449">
    <property type="entry name" value="ATPASE_A"/>
    <property type="match status" value="1"/>
</dbReference>
<proteinExistence type="inferred from homology"/>
<sequence length="250" mass="26791">MANGPTHQFLIFKIIPIDIGGIDFSFTNASLFMVASAVLSAGFLYFATSARSVIPGRSQSVAEMAYEFIASMLKEGAGTKGMKFFPLVFSLFMFVLTANLLGMVPYFYTVTSQIIVTFALALLVILTVILYGFIKHGFGFLKLFVPQGVPGILLPLVVIIEIISFLSRPISLSVRLFANMLAGHITLKVFAGFVASLGTLGALGIGGAILPLIMTVALTGLEFLVAFLQAYVFAVLTCMYLNDAVHPGGH</sequence>
<evidence type="ECO:0000255" key="1">
    <source>
        <dbReference type="HAMAP-Rule" id="MF_01393"/>
    </source>
</evidence>
<accession>B9JA28</accession>
<protein>
    <recommendedName>
        <fullName evidence="1">ATP synthase subunit a</fullName>
    </recommendedName>
    <alternativeName>
        <fullName evidence="1">ATP synthase F0 sector subunit a</fullName>
    </alternativeName>
    <alternativeName>
        <fullName evidence="1">F-ATPase subunit 6</fullName>
    </alternativeName>
</protein>
<comment type="function">
    <text evidence="1">Key component of the proton channel; it plays a direct role in the translocation of protons across the membrane.</text>
</comment>
<comment type="subunit">
    <text evidence="1">F-type ATPases have 2 components, CF(1) - the catalytic core - and CF(0) - the membrane proton channel. CF(1) has five subunits: alpha(3), beta(3), gamma(1), delta(1), epsilon(1). CF(0) has three main subunits: a(1), b(2) and c(9-12). The alpha and beta chains form an alternating ring which encloses part of the gamma chain. CF(1) is attached to CF(0) by a central stalk formed by the gamma and epsilon chains, while a peripheral stalk is formed by the delta and b chains.</text>
</comment>
<comment type="subcellular location">
    <subcellularLocation>
        <location evidence="1">Cell inner membrane</location>
        <topology evidence="1">Multi-pass membrane protein</topology>
    </subcellularLocation>
</comment>
<comment type="similarity">
    <text evidence="1">Belongs to the ATPase A chain family.</text>
</comment>
<name>ATP6_RHIR8</name>
<reference key="1">
    <citation type="journal article" date="2009" name="J. Bacteriol.">
        <title>Genome sequences of three Agrobacterium biovars help elucidate the evolution of multichromosome genomes in bacteria.</title>
        <authorList>
            <person name="Slater S.C."/>
            <person name="Goldman B.S."/>
            <person name="Goodner B."/>
            <person name="Setubal J.C."/>
            <person name="Farrand S.K."/>
            <person name="Nester E.W."/>
            <person name="Burr T.J."/>
            <person name="Banta L."/>
            <person name="Dickerman A.W."/>
            <person name="Paulsen I."/>
            <person name="Otten L."/>
            <person name="Suen G."/>
            <person name="Welch R."/>
            <person name="Almeida N.F."/>
            <person name="Arnold F."/>
            <person name="Burton O.T."/>
            <person name="Du Z."/>
            <person name="Ewing A."/>
            <person name="Godsy E."/>
            <person name="Heisel S."/>
            <person name="Houmiel K.L."/>
            <person name="Jhaveri J."/>
            <person name="Lu J."/>
            <person name="Miller N.M."/>
            <person name="Norton S."/>
            <person name="Chen Q."/>
            <person name="Phoolcharoen W."/>
            <person name="Ohlin V."/>
            <person name="Ondrusek D."/>
            <person name="Pride N."/>
            <person name="Stricklin S.L."/>
            <person name="Sun J."/>
            <person name="Wheeler C."/>
            <person name="Wilson L."/>
            <person name="Zhu H."/>
            <person name="Wood D.W."/>
        </authorList>
    </citation>
    <scope>NUCLEOTIDE SEQUENCE [LARGE SCALE GENOMIC DNA]</scope>
    <source>
        <strain>K84 / ATCC BAA-868</strain>
    </source>
</reference>
<gene>
    <name evidence="1" type="primary">atpB</name>
    <name type="ordered locus">Arad_1117</name>
</gene>